<name>GHRB_YERPE</name>
<evidence type="ECO:0000255" key="1">
    <source>
        <dbReference type="HAMAP-Rule" id="MF_01667"/>
    </source>
</evidence>
<evidence type="ECO:0000305" key="2"/>
<reference key="1">
    <citation type="journal article" date="2001" name="Nature">
        <title>Genome sequence of Yersinia pestis, the causative agent of plague.</title>
        <authorList>
            <person name="Parkhill J."/>
            <person name="Wren B.W."/>
            <person name="Thomson N.R."/>
            <person name="Titball R.W."/>
            <person name="Holden M.T.G."/>
            <person name="Prentice M.B."/>
            <person name="Sebaihia M."/>
            <person name="James K.D."/>
            <person name="Churcher C.M."/>
            <person name="Mungall K.L."/>
            <person name="Baker S."/>
            <person name="Basham D."/>
            <person name="Bentley S.D."/>
            <person name="Brooks K."/>
            <person name="Cerdeno-Tarraga A.-M."/>
            <person name="Chillingworth T."/>
            <person name="Cronin A."/>
            <person name="Davies R.M."/>
            <person name="Davis P."/>
            <person name="Dougan G."/>
            <person name="Feltwell T."/>
            <person name="Hamlin N."/>
            <person name="Holroyd S."/>
            <person name="Jagels K."/>
            <person name="Karlyshev A.V."/>
            <person name="Leather S."/>
            <person name="Moule S."/>
            <person name="Oyston P.C.F."/>
            <person name="Quail M.A."/>
            <person name="Rutherford K.M."/>
            <person name="Simmonds M."/>
            <person name="Skelton J."/>
            <person name="Stevens K."/>
            <person name="Whitehead S."/>
            <person name="Barrell B.G."/>
        </authorList>
    </citation>
    <scope>NUCLEOTIDE SEQUENCE [LARGE SCALE GENOMIC DNA]</scope>
    <source>
        <strain>CO-92 / Biovar Orientalis</strain>
    </source>
</reference>
<reference key="2">
    <citation type="journal article" date="2002" name="J. Bacteriol.">
        <title>Genome sequence of Yersinia pestis KIM.</title>
        <authorList>
            <person name="Deng W."/>
            <person name="Burland V."/>
            <person name="Plunkett G. III"/>
            <person name="Boutin A."/>
            <person name="Mayhew G.F."/>
            <person name="Liss P."/>
            <person name="Perna N.T."/>
            <person name="Rose D.J."/>
            <person name="Mau B."/>
            <person name="Zhou S."/>
            <person name="Schwartz D.C."/>
            <person name="Fetherston J.D."/>
            <person name="Lindler L.E."/>
            <person name="Brubaker R.R."/>
            <person name="Plano G.V."/>
            <person name="Straley S.C."/>
            <person name="McDonough K.A."/>
            <person name="Nilles M.L."/>
            <person name="Matson J.S."/>
            <person name="Blattner F.R."/>
            <person name="Perry R.D."/>
        </authorList>
    </citation>
    <scope>NUCLEOTIDE SEQUENCE [LARGE SCALE GENOMIC DNA]</scope>
    <source>
        <strain>KIM10+ / Biovar Mediaevalis</strain>
    </source>
</reference>
<reference key="3">
    <citation type="journal article" date="2004" name="DNA Res.">
        <title>Complete genome sequence of Yersinia pestis strain 91001, an isolate avirulent to humans.</title>
        <authorList>
            <person name="Song Y."/>
            <person name="Tong Z."/>
            <person name="Wang J."/>
            <person name="Wang L."/>
            <person name="Guo Z."/>
            <person name="Han Y."/>
            <person name="Zhang J."/>
            <person name="Pei D."/>
            <person name="Zhou D."/>
            <person name="Qin H."/>
            <person name="Pang X."/>
            <person name="Han Y."/>
            <person name="Zhai J."/>
            <person name="Li M."/>
            <person name="Cui B."/>
            <person name="Qi Z."/>
            <person name="Jin L."/>
            <person name="Dai R."/>
            <person name="Chen F."/>
            <person name="Li S."/>
            <person name="Ye C."/>
            <person name="Du Z."/>
            <person name="Lin W."/>
            <person name="Wang J."/>
            <person name="Yu J."/>
            <person name="Yang H."/>
            <person name="Wang J."/>
            <person name="Huang P."/>
            <person name="Yang R."/>
        </authorList>
    </citation>
    <scope>NUCLEOTIDE SEQUENCE [LARGE SCALE GENOMIC DNA]</scope>
    <source>
        <strain>91001 / Biovar Mediaevalis</strain>
    </source>
</reference>
<organism>
    <name type="scientific">Yersinia pestis</name>
    <dbReference type="NCBI Taxonomy" id="632"/>
    <lineage>
        <taxon>Bacteria</taxon>
        <taxon>Pseudomonadati</taxon>
        <taxon>Pseudomonadota</taxon>
        <taxon>Gammaproteobacteria</taxon>
        <taxon>Enterobacterales</taxon>
        <taxon>Yersiniaceae</taxon>
        <taxon>Yersinia</taxon>
    </lineage>
</organism>
<comment type="function">
    <text evidence="1">Catalyzes the NADPH-dependent reduction of glyoxylate and hydroxypyruvate into glycolate and glycerate, respectively.</text>
</comment>
<comment type="catalytic activity">
    <reaction evidence="1">
        <text>glycolate + NADP(+) = glyoxylate + NADPH + H(+)</text>
        <dbReference type="Rhea" id="RHEA:10992"/>
        <dbReference type="ChEBI" id="CHEBI:15378"/>
        <dbReference type="ChEBI" id="CHEBI:29805"/>
        <dbReference type="ChEBI" id="CHEBI:36655"/>
        <dbReference type="ChEBI" id="CHEBI:57783"/>
        <dbReference type="ChEBI" id="CHEBI:58349"/>
        <dbReference type="EC" id="1.1.1.79"/>
    </reaction>
</comment>
<comment type="catalytic activity">
    <reaction evidence="1">
        <text>(R)-glycerate + NAD(+) = 3-hydroxypyruvate + NADH + H(+)</text>
        <dbReference type="Rhea" id="RHEA:17905"/>
        <dbReference type="ChEBI" id="CHEBI:15378"/>
        <dbReference type="ChEBI" id="CHEBI:16659"/>
        <dbReference type="ChEBI" id="CHEBI:17180"/>
        <dbReference type="ChEBI" id="CHEBI:57540"/>
        <dbReference type="ChEBI" id="CHEBI:57945"/>
        <dbReference type="EC" id="1.1.1.81"/>
    </reaction>
</comment>
<comment type="catalytic activity">
    <reaction evidence="1">
        <text>(R)-glycerate + NADP(+) = 3-hydroxypyruvate + NADPH + H(+)</text>
        <dbReference type="Rhea" id="RHEA:18657"/>
        <dbReference type="ChEBI" id="CHEBI:15378"/>
        <dbReference type="ChEBI" id="CHEBI:16659"/>
        <dbReference type="ChEBI" id="CHEBI:17180"/>
        <dbReference type="ChEBI" id="CHEBI:57783"/>
        <dbReference type="ChEBI" id="CHEBI:58349"/>
        <dbReference type="EC" id="1.1.1.81"/>
    </reaction>
</comment>
<comment type="subunit">
    <text evidence="1">Homodimer.</text>
</comment>
<comment type="subcellular location">
    <subcellularLocation>
        <location evidence="1">Cytoplasm</location>
    </subcellularLocation>
</comment>
<comment type="similarity">
    <text evidence="1">Belongs to the D-isomer specific 2-hydroxyacid dehydrogenase family. GhrB subfamily.</text>
</comment>
<comment type="sequence caution" evidence="2">
    <conflict type="erroneous initiation">
        <sequence resource="EMBL-CDS" id="AAM87639"/>
    </conflict>
</comment>
<comment type="sequence caution" evidence="2">
    <conflict type="erroneous initiation">
        <sequence resource="EMBL-CDS" id="AAS64128"/>
    </conflict>
</comment>
<sequence length="326" mass="35465">MKPSIVLYKSIPTDLHQRLAQHFTVNSFDGLTPDNQPELLAALQQAEGLIGSGGKIDQDFLQLAPNLRAASTISVGYDNFDVEALSQRGIALMHTPTVLTETVADTMMALMLSTARRVVELAERVKAGEWQESIGDDWFGVDVHHKTIGILGMGRIGMALAQRAHFGFSMPVLYTSRRPHEAAEQRFGARHCSLDTLLAEADFLCITLPMTEQTYHMIGREQLAKMKSSAILINAGRGPVVDEQALIAALQDGTIHAAGLDVFEQEPLPVDSPLLTLRNVVAVPHIGSATHETRYNMAACAVDNLINALTGTVKENCVNPQVLITH</sequence>
<accession>Q0W9V5</accession>
<accession>Q74PC9</accession>
<accession>Q8CZG7</accession>
<protein>
    <recommendedName>
        <fullName evidence="1">Glyoxylate/hydroxypyruvate reductase B</fullName>
        <ecNumber evidence="1">1.1.1.79</ecNumber>
        <ecNumber evidence="1">1.1.1.81</ecNumber>
    </recommendedName>
</protein>
<dbReference type="EC" id="1.1.1.79" evidence="1"/>
<dbReference type="EC" id="1.1.1.81" evidence="1"/>
<dbReference type="EMBL" id="AL590842">
    <property type="protein sequence ID" value="CAL22649.1"/>
    <property type="molecule type" value="Genomic_DNA"/>
</dbReference>
<dbReference type="EMBL" id="AE009952">
    <property type="protein sequence ID" value="AAM87639.1"/>
    <property type="status" value="ALT_INIT"/>
    <property type="molecule type" value="Genomic_DNA"/>
</dbReference>
<dbReference type="EMBL" id="AE017042">
    <property type="protein sequence ID" value="AAS64128.1"/>
    <property type="status" value="ALT_INIT"/>
    <property type="molecule type" value="Genomic_DNA"/>
</dbReference>
<dbReference type="PIR" id="AF0495">
    <property type="entry name" value="AF0495"/>
</dbReference>
<dbReference type="RefSeq" id="WP_002209630.1">
    <property type="nucleotide sequence ID" value="NZ_WHKM01000037.1"/>
</dbReference>
<dbReference type="RefSeq" id="YP_002348933.1">
    <property type="nucleotide sequence ID" value="NC_003143.1"/>
</dbReference>
<dbReference type="SMR" id="Q0W9V5"/>
<dbReference type="STRING" id="214092.YPO4078"/>
<dbReference type="PaxDb" id="214092-YPO4078"/>
<dbReference type="EnsemblBacteria" id="AAS64128">
    <property type="protein sequence ID" value="AAS64128"/>
    <property type="gene ID" value="YP_3988"/>
</dbReference>
<dbReference type="GeneID" id="57974639"/>
<dbReference type="KEGG" id="ype:YPO4078"/>
<dbReference type="KEGG" id="ypk:y4096"/>
<dbReference type="KEGG" id="ypm:YP_3988"/>
<dbReference type="PATRIC" id="fig|214092.21.peg.4620"/>
<dbReference type="eggNOG" id="COG1052">
    <property type="taxonomic scope" value="Bacteria"/>
</dbReference>
<dbReference type="HOGENOM" id="CLU_019796_1_2_6"/>
<dbReference type="OMA" id="PHIAWAY"/>
<dbReference type="OrthoDB" id="9805416at2"/>
<dbReference type="Proteomes" id="UP000000815">
    <property type="component" value="Chromosome"/>
</dbReference>
<dbReference type="Proteomes" id="UP000001019">
    <property type="component" value="Chromosome"/>
</dbReference>
<dbReference type="Proteomes" id="UP000002490">
    <property type="component" value="Chromosome"/>
</dbReference>
<dbReference type="GO" id="GO:0005829">
    <property type="term" value="C:cytosol"/>
    <property type="evidence" value="ECO:0000318"/>
    <property type="project" value="GO_Central"/>
</dbReference>
<dbReference type="GO" id="GO:0005886">
    <property type="term" value="C:plasma membrane"/>
    <property type="evidence" value="ECO:0007669"/>
    <property type="project" value="UniProtKB-UniRule"/>
</dbReference>
<dbReference type="GO" id="GO:0030267">
    <property type="term" value="F:glyoxylate reductase (NADPH) activity"/>
    <property type="evidence" value="ECO:0000318"/>
    <property type="project" value="GO_Central"/>
</dbReference>
<dbReference type="GO" id="GO:0008465">
    <property type="term" value="F:hydroxypyruvate reductase (NADH) activity"/>
    <property type="evidence" value="ECO:0007669"/>
    <property type="project" value="RHEA"/>
</dbReference>
<dbReference type="GO" id="GO:0120509">
    <property type="term" value="F:hydroxypyruvate reductase (NADPH) activity"/>
    <property type="evidence" value="ECO:0007669"/>
    <property type="project" value="RHEA"/>
</dbReference>
<dbReference type="GO" id="GO:0016618">
    <property type="term" value="F:hydroxypyruvate reductase [NAD(P)H] activity"/>
    <property type="evidence" value="ECO:0000318"/>
    <property type="project" value="GO_Central"/>
</dbReference>
<dbReference type="GO" id="GO:0051287">
    <property type="term" value="F:NAD binding"/>
    <property type="evidence" value="ECO:0007669"/>
    <property type="project" value="InterPro"/>
</dbReference>
<dbReference type="CDD" id="cd05301">
    <property type="entry name" value="GDH"/>
    <property type="match status" value="1"/>
</dbReference>
<dbReference type="FunFam" id="3.40.50.720:FF:000026">
    <property type="entry name" value="Glyoxylate/hydroxypyruvate reductase B"/>
    <property type="match status" value="1"/>
</dbReference>
<dbReference type="Gene3D" id="3.40.50.720">
    <property type="entry name" value="NAD(P)-binding Rossmann-like Domain"/>
    <property type="match status" value="2"/>
</dbReference>
<dbReference type="HAMAP" id="MF_01667">
    <property type="entry name" value="2_Hacid_dh_C_GhrB"/>
    <property type="match status" value="1"/>
</dbReference>
<dbReference type="InterPro" id="IPR050223">
    <property type="entry name" value="D-isomer_2-hydroxyacid_DH"/>
</dbReference>
<dbReference type="InterPro" id="IPR006139">
    <property type="entry name" value="D-isomer_2_OHA_DH_cat_dom"/>
</dbReference>
<dbReference type="InterPro" id="IPR029753">
    <property type="entry name" value="D-isomer_DH_CS"/>
</dbReference>
<dbReference type="InterPro" id="IPR029752">
    <property type="entry name" value="D-isomer_DH_CS1"/>
</dbReference>
<dbReference type="InterPro" id="IPR006140">
    <property type="entry name" value="D-isomer_DH_NAD-bd"/>
</dbReference>
<dbReference type="InterPro" id="IPR023756">
    <property type="entry name" value="Glyo/OHPyrv_Rdtase_B"/>
</dbReference>
<dbReference type="InterPro" id="IPR036291">
    <property type="entry name" value="NAD(P)-bd_dom_sf"/>
</dbReference>
<dbReference type="NCBIfam" id="NF011938">
    <property type="entry name" value="PRK15409.1"/>
    <property type="match status" value="1"/>
</dbReference>
<dbReference type="PANTHER" id="PTHR10996">
    <property type="entry name" value="2-HYDROXYACID DEHYDROGENASE-RELATED"/>
    <property type="match status" value="1"/>
</dbReference>
<dbReference type="PANTHER" id="PTHR10996:SF283">
    <property type="entry name" value="GLYOXYLATE_HYDROXYPYRUVATE REDUCTASE B"/>
    <property type="match status" value="1"/>
</dbReference>
<dbReference type="Pfam" id="PF00389">
    <property type="entry name" value="2-Hacid_dh"/>
    <property type="match status" value="1"/>
</dbReference>
<dbReference type="Pfam" id="PF02826">
    <property type="entry name" value="2-Hacid_dh_C"/>
    <property type="match status" value="1"/>
</dbReference>
<dbReference type="SUPFAM" id="SSF52283">
    <property type="entry name" value="Formate/glycerate dehydrogenase catalytic domain-like"/>
    <property type="match status" value="1"/>
</dbReference>
<dbReference type="SUPFAM" id="SSF51735">
    <property type="entry name" value="NAD(P)-binding Rossmann-fold domains"/>
    <property type="match status" value="1"/>
</dbReference>
<dbReference type="PROSITE" id="PS00065">
    <property type="entry name" value="D_2_HYDROXYACID_DH_1"/>
    <property type="match status" value="1"/>
</dbReference>
<dbReference type="PROSITE" id="PS00671">
    <property type="entry name" value="D_2_HYDROXYACID_DH_3"/>
    <property type="match status" value="1"/>
</dbReference>
<keyword id="KW-0963">Cytoplasm</keyword>
<keyword id="KW-0520">NAD</keyword>
<keyword id="KW-0521">NADP</keyword>
<keyword id="KW-0560">Oxidoreductase</keyword>
<keyword id="KW-1185">Reference proteome</keyword>
<gene>
    <name evidence="1" type="primary">ghrB</name>
    <name type="ordered locus">YPO4078</name>
    <name type="ordered locus">y4096</name>
    <name type="ordered locus">YP_3988</name>
</gene>
<feature type="chain" id="PRO_0000348406" description="Glyoxylate/hydroxypyruvate reductase B">
    <location>
        <begin position="1"/>
        <end position="326"/>
    </location>
</feature>
<feature type="active site" evidence="1">
    <location>
        <position position="237"/>
    </location>
</feature>
<feature type="active site" evidence="1">
    <location>
        <position position="266"/>
    </location>
</feature>
<feature type="active site" description="Proton donor" evidence="1">
    <location>
        <position position="285"/>
    </location>
</feature>
<proteinExistence type="inferred from homology"/>